<accession>Q0K5Z9</accession>
<proteinExistence type="inferred from homology"/>
<name>EFTU_CUPNH</name>
<comment type="function">
    <text evidence="2">GTP hydrolase that promotes the GTP-dependent binding of aminoacyl-tRNA to the A-site of ribosomes during protein biosynthesis.</text>
</comment>
<comment type="catalytic activity">
    <reaction evidence="2">
        <text>GTP + H2O = GDP + phosphate + H(+)</text>
        <dbReference type="Rhea" id="RHEA:19669"/>
        <dbReference type="ChEBI" id="CHEBI:15377"/>
        <dbReference type="ChEBI" id="CHEBI:15378"/>
        <dbReference type="ChEBI" id="CHEBI:37565"/>
        <dbReference type="ChEBI" id="CHEBI:43474"/>
        <dbReference type="ChEBI" id="CHEBI:58189"/>
        <dbReference type="EC" id="3.6.5.3"/>
    </reaction>
    <physiologicalReaction direction="left-to-right" evidence="2">
        <dbReference type="Rhea" id="RHEA:19670"/>
    </physiologicalReaction>
</comment>
<comment type="subunit">
    <text evidence="2">Monomer.</text>
</comment>
<comment type="subcellular location">
    <subcellularLocation>
        <location evidence="2">Cytoplasm</location>
    </subcellularLocation>
</comment>
<comment type="similarity">
    <text evidence="2">Belongs to the TRAFAC class translation factor GTPase superfamily. Classic translation factor GTPase family. EF-Tu/EF-1A subfamily.</text>
</comment>
<reference key="1">
    <citation type="journal article" date="2006" name="Nat. Biotechnol.">
        <title>Genome sequence of the bioplastic-producing 'Knallgas' bacterium Ralstonia eutropha H16.</title>
        <authorList>
            <person name="Pohlmann A."/>
            <person name="Fricke W.F."/>
            <person name="Reinecke F."/>
            <person name="Kusian B."/>
            <person name="Liesegang H."/>
            <person name="Cramm R."/>
            <person name="Eitinger T."/>
            <person name="Ewering C."/>
            <person name="Poetter M."/>
            <person name="Schwartz E."/>
            <person name="Strittmatter A."/>
            <person name="Voss I."/>
            <person name="Gottschalk G."/>
            <person name="Steinbuechel A."/>
            <person name="Friedrich B."/>
            <person name="Bowien B."/>
        </authorList>
    </citation>
    <scope>NUCLEOTIDE SEQUENCE [LARGE SCALE GENOMIC DNA]</scope>
    <source>
        <strain>ATCC 17699 / DSM 428 / KCTC 22496 / NCIMB 10442 / H16 / Stanier 337</strain>
    </source>
</reference>
<gene>
    <name evidence="2" type="primary">tuf1</name>
    <name type="synonym">tufA</name>
    <name type="ordered locus">H16_A3491</name>
</gene>
<gene>
    <name evidence="2" type="primary">tuf2</name>
    <name type="synonym">tufB</name>
    <name type="ordered locus">H16_A3505</name>
</gene>
<protein>
    <recommendedName>
        <fullName evidence="2">Elongation factor Tu</fullName>
        <shortName evidence="2">EF-Tu</shortName>
        <ecNumber evidence="2">3.6.5.3</ecNumber>
    </recommendedName>
</protein>
<organism>
    <name type="scientific">Cupriavidus necator (strain ATCC 17699 / DSM 428 / KCTC 22496 / NCIMB 10442 / H16 / Stanier 337)</name>
    <name type="common">Ralstonia eutropha</name>
    <dbReference type="NCBI Taxonomy" id="381666"/>
    <lineage>
        <taxon>Bacteria</taxon>
        <taxon>Pseudomonadati</taxon>
        <taxon>Pseudomonadota</taxon>
        <taxon>Betaproteobacteria</taxon>
        <taxon>Burkholderiales</taxon>
        <taxon>Burkholderiaceae</taxon>
        <taxon>Cupriavidus</taxon>
    </lineage>
</organism>
<evidence type="ECO:0000250" key="1"/>
<evidence type="ECO:0000255" key="2">
    <source>
        <dbReference type="HAMAP-Rule" id="MF_00118"/>
    </source>
</evidence>
<feature type="chain" id="PRO_0000337483" description="Elongation factor Tu">
    <location>
        <begin position="1"/>
        <end position="396"/>
    </location>
</feature>
<feature type="domain" description="tr-type G">
    <location>
        <begin position="10"/>
        <end position="206"/>
    </location>
</feature>
<feature type="region of interest" description="G1" evidence="1">
    <location>
        <begin position="19"/>
        <end position="26"/>
    </location>
</feature>
<feature type="region of interest" description="G2" evidence="1">
    <location>
        <begin position="60"/>
        <end position="64"/>
    </location>
</feature>
<feature type="region of interest" description="G3" evidence="1">
    <location>
        <begin position="81"/>
        <end position="84"/>
    </location>
</feature>
<feature type="region of interest" description="G4" evidence="1">
    <location>
        <begin position="136"/>
        <end position="139"/>
    </location>
</feature>
<feature type="region of interest" description="G5" evidence="1">
    <location>
        <begin position="174"/>
        <end position="176"/>
    </location>
</feature>
<feature type="binding site" evidence="2">
    <location>
        <begin position="19"/>
        <end position="26"/>
    </location>
    <ligand>
        <name>GTP</name>
        <dbReference type="ChEBI" id="CHEBI:37565"/>
    </ligand>
</feature>
<feature type="binding site" evidence="2">
    <location>
        <position position="26"/>
    </location>
    <ligand>
        <name>Mg(2+)</name>
        <dbReference type="ChEBI" id="CHEBI:18420"/>
    </ligand>
</feature>
<feature type="binding site" evidence="2">
    <location>
        <begin position="81"/>
        <end position="85"/>
    </location>
    <ligand>
        <name>GTP</name>
        <dbReference type="ChEBI" id="CHEBI:37565"/>
    </ligand>
</feature>
<feature type="binding site" evidence="2">
    <location>
        <begin position="136"/>
        <end position="139"/>
    </location>
    <ligand>
        <name>GTP</name>
        <dbReference type="ChEBI" id="CHEBI:37565"/>
    </ligand>
</feature>
<keyword id="KW-0963">Cytoplasm</keyword>
<keyword id="KW-0251">Elongation factor</keyword>
<keyword id="KW-0342">GTP-binding</keyword>
<keyword id="KW-0378">Hydrolase</keyword>
<keyword id="KW-0460">Magnesium</keyword>
<keyword id="KW-0479">Metal-binding</keyword>
<keyword id="KW-0547">Nucleotide-binding</keyword>
<keyword id="KW-0648">Protein biosynthesis</keyword>
<keyword id="KW-1185">Reference proteome</keyword>
<sequence>MAKEKFERTKPHVNVGTIGHVDHGKTTLTAAIATVLAAKFGGAAKKYDEIDAAPEEKARGITINTAHVEYETANRHYAHVDCPGHADYVKNMITGAAQMDGAILVCSAADGPMPQTREHILLARQVGVPYIIVFLNKCDMVDDAELLELVEMEVRELLSKYEFPGDDTPIIKGSAKLALEGDKGELGEVAIMNLADALDTYIPTPERAVDGTFLMPVEDVFSISGRGTVVTGRIERGVVKVGEEIEIVGIKPTVKTTCTGVEMFRKLLDQGQAGDNVGLLLRGTKREDVERGQVLCKPGSIKPHTHFTGEVYILSKDEGGRHTPFFNNYRPQFYFRTTDVTGSIELPKDKEMVMPGDNVSITVKLIAPIAMEEGLRFAIREGGRTVGAGVVAKILD</sequence>
<dbReference type="EC" id="3.6.5.3" evidence="2"/>
<dbReference type="EMBL" id="AM260479">
    <property type="protein sequence ID" value="CAJ94559.1"/>
    <property type="molecule type" value="Genomic_DNA"/>
</dbReference>
<dbReference type="EMBL" id="AM260479">
    <property type="protein sequence ID" value="CAJ94572.1"/>
    <property type="molecule type" value="Genomic_DNA"/>
</dbReference>
<dbReference type="SMR" id="Q0K5Z9"/>
<dbReference type="STRING" id="381666.H16_A3491"/>
<dbReference type="KEGG" id="reh:H16_A3491"/>
<dbReference type="KEGG" id="reh:H16_A3505"/>
<dbReference type="eggNOG" id="COG0050">
    <property type="taxonomic scope" value="Bacteria"/>
</dbReference>
<dbReference type="HOGENOM" id="CLU_007265_0_0_4"/>
<dbReference type="OrthoDB" id="9803139at2"/>
<dbReference type="Proteomes" id="UP000008210">
    <property type="component" value="Chromosome 1"/>
</dbReference>
<dbReference type="GO" id="GO:0005737">
    <property type="term" value="C:cytoplasm"/>
    <property type="evidence" value="ECO:0007669"/>
    <property type="project" value="UniProtKB-SubCell"/>
</dbReference>
<dbReference type="GO" id="GO:0005525">
    <property type="term" value="F:GTP binding"/>
    <property type="evidence" value="ECO:0007669"/>
    <property type="project" value="UniProtKB-UniRule"/>
</dbReference>
<dbReference type="GO" id="GO:0003924">
    <property type="term" value="F:GTPase activity"/>
    <property type="evidence" value="ECO:0007669"/>
    <property type="project" value="InterPro"/>
</dbReference>
<dbReference type="GO" id="GO:0097216">
    <property type="term" value="F:guanosine tetraphosphate binding"/>
    <property type="evidence" value="ECO:0007669"/>
    <property type="project" value="UniProtKB-ARBA"/>
</dbReference>
<dbReference type="GO" id="GO:0003746">
    <property type="term" value="F:translation elongation factor activity"/>
    <property type="evidence" value="ECO:0007669"/>
    <property type="project" value="UniProtKB-UniRule"/>
</dbReference>
<dbReference type="CDD" id="cd01884">
    <property type="entry name" value="EF_Tu"/>
    <property type="match status" value="1"/>
</dbReference>
<dbReference type="CDD" id="cd03697">
    <property type="entry name" value="EFTU_II"/>
    <property type="match status" value="1"/>
</dbReference>
<dbReference type="CDD" id="cd03707">
    <property type="entry name" value="EFTU_III"/>
    <property type="match status" value="1"/>
</dbReference>
<dbReference type="FunFam" id="2.40.30.10:FF:000001">
    <property type="entry name" value="Elongation factor Tu"/>
    <property type="match status" value="1"/>
</dbReference>
<dbReference type="FunFam" id="3.40.50.300:FF:000003">
    <property type="entry name" value="Elongation factor Tu"/>
    <property type="match status" value="1"/>
</dbReference>
<dbReference type="Gene3D" id="3.40.50.300">
    <property type="entry name" value="P-loop containing nucleotide triphosphate hydrolases"/>
    <property type="match status" value="1"/>
</dbReference>
<dbReference type="Gene3D" id="2.40.30.10">
    <property type="entry name" value="Translation factors"/>
    <property type="match status" value="2"/>
</dbReference>
<dbReference type="HAMAP" id="MF_00118_B">
    <property type="entry name" value="EF_Tu_B"/>
    <property type="match status" value="1"/>
</dbReference>
<dbReference type="InterPro" id="IPR041709">
    <property type="entry name" value="EF-Tu_GTP-bd"/>
</dbReference>
<dbReference type="InterPro" id="IPR050055">
    <property type="entry name" value="EF-Tu_GTPase"/>
</dbReference>
<dbReference type="InterPro" id="IPR004161">
    <property type="entry name" value="EFTu-like_2"/>
</dbReference>
<dbReference type="InterPro" id="IPR033720">
    <property type="entry name" value="EFTU_2"/>
</dbReference>
<dbReference type="InterPro" id="IPR031157">
    <property type="entry name" value="G_TR_CS"/>
</dbReference>
<dbReference type="InterPro" id="IPR027417">
    <property type="entry name" value="P-loop_NTPase"/>
</dbReference>
<dbReference type="InterPro" id="IPR005225">
    <property type="entry name" value="Small_GTP-bd"/>
</dbReference>
<dbReference type="InterPro" id="IPR000795">
    <property type="entry name" value="T_Tr_GTP-bd_dom"/>
</dbReference>
<dbReference type="InterPro" id="IPR009000">
    <property type="entry name" value="Transl_B-barrel_sf"/>
</dbReference>
<dbReference type="InterPro" id="IPR009001">
    <property type="entry name" value="Transl_elong_EF1A/Init_IF2_C"/>
</dbReference>
<dbReference type="InterPro" id="IPR004541">
    <property type="entry name" value="Transl_elong_EFTu/EF1A_bac/org"/>
</dbReference>
<dbReference type="InterPro" id="IPR004160">
    <property type="entry name" value="Transl_elong_EFTu/EF1A_C"/>
</dbReference>
<dbReference type="NCBIfam" id="TIGR00485">
    <property type="entry name" value="EF-Tu"/>
    <property type="match status" value="1"/>
</dbReference>
<dbReference type="NCBIfam" id="NF000766">
    <property type="entry name" value="PRK00049.1"/>
    <property type="match status" value="1"/>
</dbReference>
<dbReference type="NCBIfam" id="NF009372">
    <property type="entry name" value="PRK12735.1"/>
    <property type="match status" value="1"/>
</dbReference>
<dbReference type="NCBIfam" id="NF009373">
    <property type="entry name" value="PRK12736.1"/>
    <property type="match status" value="1"/>
</dbReference>
<dbReference type="NCBIfam" id="TIGR00231">
    <property type="entry name" value="small_GTP"/>
    <property type="match status" value="1"/>
</dbReference>
<dbReference type="PANTHER" id="PTHR43721:SF22">
    <property type="entry name" value="ELONGATION FACTOR TU, MITOCHONDRIAL"/>
    <property type="match status" value="1"/>
</dbReference>
<dbReference type="PANTHER" id="PTHR43721">
    <property type="entry name" value="ELONGATION FACTOR TU-RELATED"/>
    <property type="match status" value="1"/>
</dbReference>
<dbReference type="Pfam" id="PF00009">
    <property type="entry name" value="GTP_EFTU"/>
    <property type="match status" value="1"/>
</dbReference>
<dbReference type="Pfam" id="PF03144">
    <property type="entry name" value="GTP_EFTU_D2"/>
    <property type="match status" value="1"/>
</dbReference>
<dbReference type="Pfam" id="PF03143">
    <property type="entry name" value="GTP_EFTU_D3"/>
    <property type="match status" value="1"/>
</dbReference>
<dbReference type="PRINTS" id="PR00315">
    <property type="entry name" value="ELONGATNFCT"/>
</dbReference>
<dbReference type="SUPFAM" id="SSF50465">
    <property type="entry name" value="EF-Tu/eEF-1alpha/eIF2-gamma C-terminal domain"/>
    <property type="match status" value="1"/>
</dbReference>
<dbReference type="SUPFAM" id="SSF52540">
    <property type="entry name" value="P-loop containing nucleoside triphosphate hydrolases"/>
    <property type="match status" value="1"/>
</dbReference>
<dbReference type="SUPFAM" id="SSF50447">
    <property type="entry name" value="Translation proteins"/>
    <property type="match status" value="1"/>
</dbReference>
<dbReference type="PROSITE" id="PS00301">
    <property type="entry name" value="G_TR_1"/>
    <property type="match status" value="1"/>
</dbReference>
<dbReference type="PROSITE" id="PS51722">
    <property type="entry name" value="G_TR_2"/>
    <property type="match status" value="1"/>
</dbReference>